<feature type="chain" id="PRO_1000124432" description="Diaminopimelate epimerase">
    <location>
        <begin position="1"/>
        <end position="278"/>
    </location>
</feature>
<feature type="active site" description="Proton donor" evidence="1">
    <location>
        <position position="76"/>
    </location>
</feature>
<feature type="active site" description="Proton acceptor" evidence="1">
    <location>
        <position position="220"/>
    </location>
</feature>
<feature type="binding site" evidence="1">
    <location>
        <position position="13"/>
    </location>
    <ligand>
        <name>substrate</name>
    </ligand>
</feature>
<feature type="binding site" evidence="1">
    <location>
        <position position="46"/>
    </location>
    <ligand>
        <name>substrate</name>
    </ligand>
</feature>
<feature type="binding site" evidence="1">
    <location>
        <position position="67"/>
    </location>
    <ligand>
        <name>substrate</name>
    </ligand>
</feature>
<feature type="binding site" evidence="1">
    <location>
        <begin position="77"/>
        <end position="78"/>
    </location>
    <ligand>
        <name>substrate</name>
    </ligand>
</feature>
<feature type="binding site" evidence="1">
    <location>
        <position position="160"/>
    </location>
    <ligand>
        <name>substrate</name>
    </ligand>
</feature>
<feature type="binding site" evidence="1">
    <location>
        <position position="193"/>
    </location>
    <ligand>
        <name>substrate</name>
    </ligand>
</feature>
<feature type="binding site" evidence="1">
    <location>
        <begin position="211"/>
        <end position="212"/>
    </location>
    <ligand>
        <name>substrate</name>
    </ligand>
</feature>
<feature type="binding site" evidence="1">
    <location>
        <begin position="221"/>
        <end position="222"/>
    </location>
    <ligand>
        <name>substrate</name>
    </ligand>
</feature>
<feature type="site" description="Could be important to modulate the pK values of the two catalytic cysteine residues" evidence="1">
    <location>
        <position position="162"/>
    </location>
</feature>
<feature type="site" description="Could be important to modulate the pK values of the two catalytic cysteine residues" evidence="1">
    <location>
        <position position="211"/>
    </location>
</feature>
<feature type="site" description="Important for dimerization" evidence="1">
    <location>
        <position position="272"/>
    </location>
</feature>
<proteinExistence type="inferred from homology"/>
<dbReference type="EC" id="5.1.1.7" evidence="1"/>
<dbReference type="EMBL" id="CP001339">
    <property type="protein sequence ID" value="ACL71149.1"/>
    <property type="molecule type" value="Genomic_DNA"/>
</dbReference>
<dbReference type="RefSeq" id="WP_012636638.1">
    <property type="nucleotide sequence ID" value="NC_011901.1"/>
</dbReference>
<dbReference type="SMR" id="B8GT89"/>
<dbReference type="STRING" id="396588.Tgr7_0045"/>
<dbReference type="KEGG" id="tgr:Tgr7_0045"/>
<dbReference type="eggNOG" id="COG0253">
    <property type="taxonomic scope" value="Bacteria"/>
</dbReference>
<dbReference type="HOGENOM" id="CLU_053306_1_1_6"/>
<dbReference type="OrthoDB" id="9805408at2"/>
<dbReference type="UniPathway" id="UPA00034">
    <property type="reaction ID" value="UER00025"/>
</dbReference>
<dbReference type="Proteomes" id="UP000002383">
    <property type="component" value="Chromosome"/>
</dbReference>
<dbReference type="GO" id="GO:0005829">
    <property type="term" value="C:cytosol"/>
    <property type="evidence" value="ECO:0007669"/>
    <property type="project" value="TreeGrafter"/>
</dbReference>
<dbReference type="GO" id="GO:0008837">
    <property type="term" value="F:diaminopimelate epimerase activity"/>
    <property type="evidence" value="ECO:0007669"/>
    <property type="project" value="UniProtKB-UniRule"/>
</dbReference>
<dbReference type="GO" id="GO:0009089">
    <property type="term" value="P:lysine biosynthetic process via diaminopimelate"/>
    <property type="evidence" value="ECO:0007669"/>
    <property type="project" value="UniProtKB-UniRule"/>
</dbReference>
<dbReference type="FunFam" id="3.10.310.10:FF:000001">
    <property type="entry name" value="Diaminopimelate epimerase"/>
    <property type="match status" value="1"/>
</dbReference>
<dbReference type="Gene3D" id="3.10.310.10">
    <property type="entry name" value="Diaminopimelate Epimerase, Chain A, domain 1"/>
    <property type="match status" value="2"/>
</dbReference>
<dbReference type="HAMAP" id="MF_00197">
    <property type="entry name" value="DAP_epimerase"/>
    <property type="match status" value="1"/>
</dbReference>
<dbReference type="InterPro" id="IPR018510">
    <property type="entry name" value="DAP_epimerase_AS"/>
</dbReference>
<dbReference type="InterPro" id="IPR001653">
    <property type="entry name" value="DAP_epimerase_DapF"/>
</dbReference>
<dbReference type="NCBIfam" id="TIGR00652">
    <property type="entry name" value="DapF"/>
    <property type="match status" value="1"/>
</dbReference>
<dbReference type="PANTHER" id="PTHR31689:SF0">
    <property type="entry name" value="DIAMINOPIMELATE EPIMERASE"/>
    <property type="match status" value="1"/>
</dbReference>
<dbReference type="PANTHER" id="PTHR31689">
    <property type="entry name" value="DIAMINOPIMELATE EPIMERASE, CHLOROPLASTIC"/>
    <property type="match status" value="1"/>
</dbReference>
<dbReference type="Pfam" id="PF01678">
    <property type="entry name" value="DAP_epimerase"/>
    <property type="match status" value="2"/>
</dbReference>
<dbReference type="SUPFAM" id="SSF54506">
    <property type="entry name" value="Diaminopimelate epimerase-like"/>
    <property type="match status" value="1"/>
</dbReference>
<dbReference type="PROSITE" id="PS01326">
    <property type="entry name" value="DAP_EPIMERASE"/>
    <property type="match status" value="1"/>
</dbReference>
<reference key="1">
    <citation type="journal article" date="2011" name="Stand. Genomic Sci.">
        <title>Complete genome sequence of 'Thioalkalivibrio sulfidophilus' HL-EbGr7.</title>
        <authorList>
            <person name="Muyzer G."/>
            <person name="Sorokin D.Y."/>
            <person name="Mavromatis K."/>
            <person name="Lapidus A."/>
            <person name="Clum A."/>
            <person name="Ivanova N."/>
            <person name="Pati A."/>
            <person name="d'Haeseleer P."/>
            <person name="Woyke T."/>
            <person name="Kyrpides N.C."/>
        </authorList>
    </citation>
    <scope>NUCLEOTIDE SEQUENCE [LARGE SCALE GENOMIC DNA]</scope>
    <source>
        <strain>HL-EbGR7</strain>
    </source>
</reference>
<accession>B8GT89</accession>
<comment type="function">
    <text evidence="1">Catalyzes the stereoinversion of LL-2,6-diaminopimelate (L,L-DAP) to meso-diaminopimelate (meso-DAP), a precursor of L-lysine and an essential component of the bacterial peptidoglycan.</text>
</comment>
<comment type="catalytic activity">
    <reaction evidence="1">
        <text>(2S,6S)-2,6-diaminopimelate = meso-2,6-diaminopimelate</text>
        <dbReference type="Rhea" id="RHEA:15393"/>
        <dbReference type="ChEBI" id="CHEBI:57609"/>
        <dbReference type="ChEBI" id="CHEBI:57791"/>
        <dbReference type="EC" id="5.1.1.7"/>
    </reaction>
</comment>
<comment type="pathway">
    <text evidence="1">Amino-acid biosynthesis; L-lysine biosynthesis via DAP pathway; DL-2,6-diaminopimelate from LL-2,6-diaminopimelate: step 1/1.</text>
</comment>
<comment type="subunit">
    <text evidence="1">Homodimer.</text>
</comment>
<comment type="subcellular location">
    <subcellularLocation>
        <location evidence="1">Cytoplasm</location>
    </subcellularLocation>
</comment>
<comment type="similarity">
    <text evidence="1">Belongs to the diaminopimelate epimerase family.</text>
</comment>
<gene>
    <name evidence="1" type="primary">dapF</name>
    <name type="ordered locus">Tgr7_0045</name>
</gene>
<organism>
    <name type="scientific">Thioalkalivibrio sulfidiphilus (strain HL-EbGR7)</name>
    <dbReference type="NCBI Taxonomy" id="396588"/>
    <lineage>
        <taxon>Bacteria</taxon>
        <taxon>Pseudomonadati</taxon>
        <taxon>Pseudomonadota</taxon>
        <taxon>Gammaproteobacteria</taxon>
        <taxon>Chromatiales</taxon>
        <taxon>Ectothiorhodospiraceae</taxon>
        <taxon>Thioalkalivibrio</taxon>
    </lineage>
</organism>
<name>DAPF_THISH</name>
<protein>
    <recommendedName>
        <fullName evidence="1">Diaminopimelate epimerase</fullName>
        <shortName evidence="1">DAP epimerase</shortName>
        <ecNumber evidence="1">5.1.1.7</ecNumber>
    </recommendedName>
    <alternativeName>
        <fullName evidence="1">PLP-independent amino acid racemase</fullName>
    </alternativeName>
</protein>
<sequence length="278" mass="30093">MRIQFSKMHGLGNDFVVIDAIHQPVDLSPDQVRLLAHRRFGVGCDQVLLVERPSDPAAADFRYRIFNADGNEVEQCGNGARCFAVFVRERGLTAKDHIPVETAAGIIHLQVQPDGQVTVDMGPPRLKPWQIPFEAESAMTSYPLEVEGETYEIGAVSMGNPHAVLRVDNVQTAPVARLGPLIEAHPRFPRHVNVGFMQVVSPGEIRLRVYERGVGETLACGTGACAAVVSGRIQGLLDETVAVDLPGGRLVINWAGQEEAPVMMTGPATQVFTGSIDI</sequence>
<keyword id="KW-0028">Amino-acid biosynthesis</keyword>
<keyword id="KW-0963">Cytoplasm</keyword>
<keyword id="KW-0413">Isomerase</keyword>
<keyword id="KW-0457">Lysine biosynthesis</keyword>
<keyword id="KW-1185">Reference proteome</keyword>
<evidence type="ECO:0000255" key="1">
    <source>
        <dbReference type="HAMAP-Rule" id="MF_00197"/>
    </source>
</evidence>